<proteinExistence type="evidence at protein level"/>
<dbReference type="EMBL" id="M92038">
    <property type="protein sequence ID" value="AAA48786.1"/>
    <property type="molecule type" value="mRNA"/>
</dbReference>
<dbReference type="EMBL" id="M88178">
    <property type="protein sequence ID" value="AAA49036.1"/>
    <property type="molecule type" value="Genomic_DNA"/>
</dbReference>
<dbReference type="PIR" id="A42347">
    <property type="entry name" value="A42347"/>
</dbReference>
<dbReference type="RefSeq" id="NP_990821.1">
    <property type="nucleotide sequence ID" value="NM_205490.1"/>
</dbReference>
<dbReference type="SMR" id="P28683"/>
<dbReference type="BioGRID" id="676733">
    <property type="interactions" value="1"/>
</dbReference>
<dbReference type="FunCoup" id="P28683">
    <property type="interactions" value="42"/>
</dbReference>
<dbReference type="STRING" id="9031.ENSGALP00000004483"/>
<dbReference type="GlyCosmos" id="P28683">
    <property type="glycosylation" value="2 sites, No reported glycans"/>
</dbReference>
<dbReference type="GlyGen" id="P28683">
    <property type="glycosylation" value="2 sites"/>
</dbReference>
<dbReference type="iPTMnet" id="P28683"/>
<dbReference type="PaxDb" id="9031-ENSGALP00000004483"/>
<dbReference type="Ensembl" id="ENSGALT00010066008.1">
    <property type="protein sequence ID" value="ENSGALP00010040274.1"/>
    <property type="gene ID" value="ENSGALG00010027226.1"/>
</dbReference>
<dbReference type="GeneID" id="396486"/>
<dbReference type="KEGG" id="gga:396486"/>
<dbReference type="CTD" id="396486"/>
<dbReference type="VEuPathDB" id="HostDB:geneid_396486"/>
<dbReference type="eggNOG" id="KOG3656">
    <property type="taxonomic scope" value="Eukaryota"/>
</dbReference>
<dbReference type="GeneTree" id="ENSGT01030000234549"/>
<dbReference type="HOGENOM" id="CLU_009579_3_0_1"/>
<dbReference type="InParanoid" id="P28683"/>
<dbReference type="OMA" id="WNGYFIF"/>
<dbReference type="OrthoDB" id="5962323at2759"/>
<dbReference type="PhylomeDB" id="P28683"/>
<dbReference type="TreeFam" id="TF324998"/>
<dbReference type="PRO" id="PR:P28683"/>
<dbReference type="Proteomes" id="UP000000539">
    <property type="component" value="Chromosome 26"/>
</dbReference>
<dbReference type="GO" id="GO:0001750">
    <property type="term" value="C:photoreceptor outer segment"/>
    <property type="evidence" value="ECO:0000318"/>
    <property type="project" value="GO_Central"/>
</dbReference>
<dbReference type="GO" id="GO:0005886">
    <property type="term" value="C:plasma membrane"/>
    <property type="evidence" value="ECO:0000318"/>
    <property type="project" value="GO_Central"/>
</dbReference>
<dbReference type="GO" id="GO:0008020">
    <property type="term" value="F:G protein-coupled photoreceptor activity"/>
    <property type="evidence" value="ECO:0000318"/>
    <property type="project" value="GO_Central"/>
</dbReference>
<dbReference type="GO" id="GO:0016038">
    <property type="term" value="P:absorption of visible light"/>
    <property type="evidence" value="ECO:0000314"/>
    <property type="project" value="AgBase"/>
</dbReference>
<dbReference type="GO" id="GO:0071482">
    <property type="term" value="P:cellular response to light stimulus"/>
    <property type="evidence" value="ECO:0000318"/>
    <property type="project" value="GO_Central"/>
</dbReference>
<dbReference type="GO" id="GO:0007186">
    <property type="term" value="P:G protein-coupled receptor signaling pathway"/>
    <property type="evidence" value="ECO:0000318"/>
    <property type="project" value="GO_Central"/>
</dbReference>
<dbReference type="GO" id="GO:0016037">
    <property type="term" value="P:light absorption"/>
    <property type="evidence" value="ECO:0000314"/>
    <property type="project" value="AgBase"/>
</dbReference>
<dbReference type="GO" id="GO:0007602">
    <property type="term" value="P:phototransduction"/>
    <property type="evidence" value="ECO:0000318"/>
    <property type="project" value="GO_Central"/>
</dbReference>
<dbReference type="GO" id="GO:0007601">
    <property type="term" value="P:visual perception"/>
    <property type="evidence" value="ECO:0007669"/>
    <property type="project" value="UniProtKB-KW"/>
</dbReference>
<dbReference type="FunFam" id="1.20.1070.10:FF:000018">
    <property type="entry name" value="Rhodopsin"/>
    <property type="match status" value="1"/>
</dbReference>
<dbReference type="Gene3D" id="1.20.1070.10">
    <property type="entry name" value="Rhodopsin 7-helix transmembrane proteins"/>
    <property type="match status" value="1"/>
</dbReference>
<dbReference type="InterPro" id="IPR050125">
    <property type="entry name" value="GPCR_opsins"/>
</dbReference>
<dbReference type="InterPro" id="IPR000276">
    <property type="entry name" value="GPCR_Rhodpsn"/>
</dbReference>
<dbReference type="InterPro" id="IPR017452">
    <property type="entry name" value="GPCR_Rhodpsn_7TM"/>
</dbReference>
<dbReference type="InterPro" id="IPR001760">
    <property type="entry name" value="Opsin"/>
</dbReference>
<dbReference type="InterPro" id="IPR027430">
    <property type="entry name" value="Retinal_BS"/>
</dbReference>
<dbReference type="InterPro" id="IPR000732">
    <property type="entry name" value="Rhodopsin"/>
</dbReference>
<dbReference type="InterPro" id="IPR019477">
    <property type="entry name" value="Rhodopsin_N"/>
</dbReference>
<dbReference type="PANTHER" id="PTHR24240">
    <property type="entry name" value="OPSIN"/>
    <property type="match status" value="1"/>
</dbReference>
<dbReference type="Pfam" id="PF00001">
    <property type="entry name" value="7tm_1"/>
    <property type="match status" value="1"/>
</dbReference>
<dbReference type="Pfam" id="PF10413">
    <property type="entry name" value="Rhodopsin_N"/>
    <property type="match status" value="1"/>
</dbReference>
<dbReference type="PRINTS" id="PR00237">
    <property type="entry name" value="GPCRRHODOPSN"/>
</dbReference>
<dbReference type="PRINTS" id="PR00238">
    <property type="entry name" value="OPSIN"/>
</dbReference>
<dbReference type="PRINTS" id="PR00579">
    <property type="entry name" value="RHODOPSIN"/>
</dbReference>
<dbReference type="SUPFAM" id="SSF81321">
    <property type="entry name" value="Family A G protein-coupled receptor-like"/>
    <property type="match status" value="1"/>
</dbReference>
<dbReference type="PROSITE" id="PS00237">
    <property type="entry name" value="G_PROTEIN_RECEP_F1_1"/>
    <property type="match status" value="1"/>
</dbReference>
<dbReference type="PROSITE" id="PS50262">
    <property type="entry name" value="G_PROTEIN_RECEP_F1_2"/>
    <property type="match status" value="1"/>
</dbReference>
<dbReference type="PROSITE" id="PS00238">
    <property type="entry name" value="OPSIN"/>
    <property type="match status" value="1"/>
</dbReference>
<gene>
    <name type="primary">PRA1</name>
</gene>
<sequence>MNGTEGINFYVPMSNKTGVVRSPFEYPQYYLAEPWKYRLVCCYIFFLISTGLPINLLTLLVTFKHKKLRQPLNYILVNLAVADLFMACFGFTVTFYTAWNGYFVFGPVGCAVEGFFATLGGQVALWSLVVLAIERYIVVCKPMGNFRFSATHAMMGIAFTWVMAFSCAAPPLFGWSRYMPEGMQCSCGPDYYTHNPDYHNESYVLYMFVIHFIIPVVVIFFSYGRLICKVREAAAQQQESATTQKAEKEVTRMVILMVLGFMLAWTPYAVVAFWIFTNKGADFTATLMAVPAFFSKSSSLYNPIIYVLMNKQFRNCMITTICCGKNPFGDEDVSSTVSQSKTEVSSVSSSQVSPA</sequence>
<name>OPSG_CHICK</name>
<accession>P28683</accession>
<feature type="chain" id="PRO_0000197782" description="Green-sensitive opsin">
    <location>
        <begin position="1"/>
        <end position="355"/>
    </location>
</feature>
<feature type="topological domain" description="Extracellular">
    <location>
        <begin position="1"/>
        <end position="36"/>
    </location>
</feature>
<feature type="transmembrane region" description="Helical; Name=1" evidence="2">
    <location>
        <begin position="37"/>
        <end position="61"/>
    </location>
</feature>
<feature type="topological domain" description="Cytoplasmic">
    <location>
        <begin position="62"/>
        <end position="73"/>
    </location>
</feature>
<feature type="transmembrane region" description="Helical; Name=2" evidence="2">
    <location>
        <begin position="74"/>
        <end position="99"/>
    </location>
</feature>
<feature type="topological domain" description="Extracellular">
    <location>
        <begin position="100"/>
        <end position="113"/>
    </location>
</feature>
<feature type="transmembrane region" description="Helical; Name=3" evidence="2">
    <location>
        <begin position="114"/>
        <end position="133"/>
    </location>
</feature>
<feature type="topological domain" description="Cytoplasmic">
    <location>
        <begin position="134"/>
        <end position="152"/>
    </location>
</feature>
<feature type="transmembrane region" description="Helical; Name=4" evidence="2">
    <location>
        <begin position="153"/>
        <end position="176"/>
    </location>
</feature>
<feature type="topological domain" description="Extracellular">
    <location>
        <begin position="177"/>
        <end position="202"/>
    </location>
</feature>
<feature type="transmembrane region" description="Helical; Name=5" evidence="2">
    <location>
        <begin position="203"/>
        <end position="230"/>
    </location>
</feature>
<feature type="topological domain" description="Cytoplasmic">
    <location>
        <begin position="231"/>
        <end position="252"/>
    </location>
</feature>
<feature type="transmembrane region" description="Helical; Name=6" evidence="2">
    <location>
        <begin position="253"/>
        <end position="276"/>
    </location>
</feature>
<feature type="topological domain" description="Extracellular">
    <location>
        <begin position="277"/>
        <end position="284"/>
    </location>
</feature>
<feature type="transmembrane region" description="Helical; Name=7" evidence="2">
    <location>
        <begin position="285"/>
        <end position="309"/>
    </location>
</feature>
<feature type="topological domain" description="Cytoplasmic">
    <location>
        <begin position="310"/>
        <end position="355"/>
    </location>
</feature>
<feature type="modified residue" description="N6-(retinylidene)lysine" evidence="1">
    <location>
        <position position="296"/>
    </location>
</feature>
<feature type="glycosylation site" description="N-linked (GlcNAc...) asparagine" evidence="2">
    <location>
        <position position="2"/>
    </location>
</feature>
<feature type="glycosylation site" description="N-linked (GlcNAc...) asparagine" evidence="2">
    <location>
        <position position="15"/>
    </location>
</feature>
<feature type="disulfide bond" evidence="3">
    <location>
        <begin position="110"/>
        <end position="187"/>
    </location>
</feature>
<keyword id="KW-0157">Chromophore</keyword>
<keyword id="KW-0903">Direct protein sequencing</keyword>
<keyword id="KW-1015">Disulfide bond</keyword>
<keyword id="KW-0297">G-protein coupled receptor</keyword>
<keyword id="KW-0325">Glycoprotein</keyword>
<keyword id="KW-0472">Membrane</keyword>
<keyword id="KW-0597">Phosphoprotein</keyword>
<keyword id="KW-0600">Photoreceptor protein</keyword>
<keyword id="KW-0675">Receptor</keyword>
<keyword id="KW-1185">Reference proteome</keyword>
<keyword id="KW-0681">Retinal protein</keyword>
<keyword id="KW-0716">Sensory transduction</keyword>
<keyword id="KW-0807">Transducer</keyword>
<keyword id="KW-0812">Transmembrane</keyword>
<keyword id="KW-1133">Transmembrane helix</keyword>
<keyword id="KW-0844">Vision</keyword>
<comment type="function">
    <text>Visual pigments are the light-absorbing molecules that mediate vision. They consist of an apoprotein, opsin, covalently linked to cis-retinal.</text>
</comment>
<comment type="biophysicochemical properties">
    <absorption>
        <max>508 nm</max>
    </absorption>
</comment>
<comment type="subcellular location">
    <subcellularLocation>
        <location>Membrane</location>
        <topology>Multi-pass membrane protein</topology>
    </subcellularLocation>
</comment>
<comment type="tissue specificity">
    <text>The color pigments are found in the cone photoreceptor cells.</text>
</comment>
<comment type="PTM">
    <text>Phosphorylated on some or all of the serine and threonine residues present in the C-terminal region.</text>
</comment>
<comment type="similarity">
    <text evidence="3">Belongs to the G-protein coupled receptor 1 family. Opsin subfamily.</text>
</comment>
<evidence type="ECO:0000250" key="1"/>
<evidence type="ECO:0000255" key="2"/>
<evidence type="ECO:0000255" key="3">
    <source>
        <dbReference type="PROSITE-ProRule" id="PRU00521"/>
    </source>
</evidence>
<organism>
    <name type="scientific">Gallus gallus</name>
    <name type="common">Chicken</name>
    <dbReference type="NCBI Taxonomy" id="9031"/>
    <lineage>
        <taxon>Eukaryota</taxon>
        <taxon>Metazoa</taxon>
        <taxon>Chordata</taxon>
        <taxon>Craniata</taxon>
        <taxon>Vertebrata</taxon>
        <taxon>Euteleostomi</taxon>
        <taxon>Archelosauria</taxon>
        <taxon>Archosauria</taxon>
        <taxon>Dinosauria</taxon>
        <taxon>Saurischia</taxon>
        <taxon>Theropoda</taxon>
        <taxon>Coelurosauria</taxon>
        <taxon>Aves</taxon>
        <taxon>Neognathae</taxon>
        <taxon>Galloanserae</taxon>
        <taxon>Galliformes</taxon>
        <taxon>Phasianidae</taxon>
        <taxon>Phasianinae</taxon>
        <taxon>Gallus</taxon>
    </lineage>
</organism>
<protein>
    <recommendedName>
        <fullName>Green-sensitive opsin</fullName>
    </recommendedName>
    <alternativeName>
        <fullName>Green cone photoreceptor pigment</fullName>
    </alternativeName>
</protein>
<reference key="1">
    <citation type="journal article" date="1992" name="Proc. Natl. Acad. Sci. U.S.A.">
        <title>Primary structures of chicken cone visual pigments: vertebrate rhodopsins have evolved out of cone visual pigments.</title>
        <authorList>
            <person name="Okano T."/>
            <person name="Kojima D."/>
            <person name="Fukada Y."/>
            <person name="Shichida Y."/>
            <person name="Yoshizawa T."/>
        </authorList>
    </citation>
    <scope>NUCLEOTIDE SEQUENCE [MRNA]</scope>
    <scope>PROTEIN SEQUENCE OF 342-355</scope>
    <source>
        <tissue>Retina</tissue>
    </source>
</reference>
<reference key="2">
    <citation type="journal article" date="1992" name="Biochemistry">
        <title>A visual pigment from chicken that resembles rhodopsin: amino acid sequence, gene structure, and functional expression.</title>
        <authorList>
            <person name="Wang S.Z."/>
            <person name="Adler R."/>
            <person name="Nathans J."/>
        </authorList>
    </citation>
    <scope>NUCLEOTIDE SEQUENCE [GENOMIC DNA]</scope>
</reference>